<gene>
    <name evidence="1" type="primary">dltA</name>
    <name type="ordered locus">SH2021</name>
</gene>
<proteinExistence type="inferred from homology"/>
<organism>
    <name type="scientific">Staphylococcus haemolyticus (strain JCSC1435)</name>
    <dbReference type="NCBI Taxonomy" id="279808"/>
    <lineage>
        <taxon>Bacteria</taxon>
        <taxon>Bacillati</taxon>
        <taxon>Bacillota</taxon>
        <taxon>Bacilli</taxon>
        <taxon>Bacillales</taxon>
        <taxon>Staphylococcaceae</taxon>
        <taxon>Staphylococcus</taxon>
    </lineage>
</organism>
<protein>
    <recommendedName>
        <fullName evidence="1">D-alanine--D-alanyl carrier protein ligase</fullName>
        <shortName evidence="1">DCL</shortName>
        <ecNumber evidence="1">6.2.1.54</ecNumber>
    </recommendedName>
    <alternativeName>
        <fullName evidence="1">D-alanine--poly(phosphoribitol) ligase subunit 1</fullName>
    </alternativeName>
    <alternativeName>
        <fullName evidence="1">D-alanine-activating enzyme</fullName>
        <shortName evidence="1">DAE</shortName>
    </alternativeName>
</protein>
<feature type="chain" id="PRO_0000213158" description="D-alanine--D-alanyl carrier protein ligase">
    <location>
        <begin position="1"/>
        <end position="485"/>
    </location>
</feature>
<feature type="binding site" evidence="1">
    <location>
        <begin position="144"/>
        <end position="145"/>
    </location>
    <ligand>
        <name>ATP</name>
        <dbReference type="ChEBI" id="CHEBI:30616"/>
    </ligand>
</feature>
<feature type="binding site" evidence="1">
    <location>
        <position position="189"/>
    </location>
    <ligand>
        <name>D-alanine</name>
        <dbReference type="ChEBI" id="CHEBI:57416"/>
    </ligand>
</feature>
<feature type="binding site" evidence="1">
    <location>
        <begin position="284"/>
        <end position="289"/>
    </location>
    <ligand>
        <name>ATP</name>
        <dbReference type="ChEBI" id="CHEBI:30616"/>
    </ligand>
</feature>
<feature type="binding site" evidence="1">
    <location>
        <position position="293"/>
    </location>
    <ligand>
        <name>D-alanine</name>
        <dbReference type="ChEBI" id="CHEBI:57416"/>
    </ligand>
</feature>
<feature type="binding site" evidence="1">
    <location>
        <position position="365"/>
    </location>
    <ligand>
        <name>ATP</name>
        <dbReference type="ChEBI" id="CHEBI:30616"/>
    </ligand>
</feature>
<feature type="binding site" evidence="1">
    <location>
        <position position="473"/>
    </location>
    <ligand>
        <name>ATP</name>
        <dbReference type="ChEBI" id="CHEBI:30616"/>
    </ligand>
</feature>
<feature type="binding site" evidence="1">
    <location>
        <position position="473"/>
    </location>
    <ligand>
        <name>D-alanine</name>
        <dbReference type="ChEBI" id="CHEBI:57416"/>
    </ligand>
</feature>
<dbReference type="EC" id="6.2.1.54" evidence="1"/>
<dbReference type="EMBL" id="AP006716">
    <property type="protein sequence ID" value="BAE05330.1"/>
    <property type="molecule type" value="Genomic_DNA"/>
</dbReference>
<dbReference type="RefSeq" id="WP_011276287.1">
    <property type="nucleotide sequence ID" value="NC_007168.1"/>
</dbReference>
<dbReference type="SMR" id="Q4L4U5"/>
<dbReference type="KEGG" id="sha:SH2021"/>
<dbReference type="eggNOG" id="COG1020">
    <property type="taxonomic scope" value="Bacteria"/>
</dbReference>
<dbReference type="HOGENOM" id="CLU_000022_2_12_9"/>
<dbReference type="OrthoDB" id="9765680at2"/>
<dbReference type="UniPathway" id="UPA00556"/>
<dbReference type="Proteomes" id="UP000000543">
    <property type="component" value="Chromosome"/>
</dbReference>
<dbReference type="GO" id="GO:0005737">
    <property type="term" value="C:cytoplasm"/>
    <property type="evidence" value="ECO:0007669"/>
    <property type="project" value="UniProtKB-SubCell"/>
</dbReference>
<dbReference type="GO" id="GO:0005524">
    <property type="term" value="F:ATP binding"/>
    <property type="evidence" value="ECO:0007669"/>
    <property type="project" value="UniProtKB-KW"/>
</dbReference>
<dbReference type="GO" id="GO:0047473">
    <property type="term" value="F:D-alanine [D-alanyl carrier protein] ligase activity"/>
    <property type="evidence" value="ECO:0007669"/>
    <property type="project" value="UniProtKB-UniRule"/>
</dbReference>
<dbReference type="GO" id="GO:0070395">
    <property type="term" value="P:lipoteichoic acid biosynthetic process"/>
    <property type="evidence" value="ECO:0007669"/>
    <property type="project" value="UniProtKB-UniRule"/>
</dbReference>
<dbReference type="CDD" id="cd05945">
    <property type="entry name" value="DltA"/>
    <property type="match status" value="1"/>
</dbReference>
<dbReference type="FunFam" id="3.30.300.30:FF:000012">
    <property type="entry name" value="D-alanine--D-alanyl carrier protein ligase"/>
    <property type="match status" value="1"/>
</dbReference>
<dbReference type="Gene3D" id="3.30.300.30">
    <property type="match status" value="1"/>
</dbReference>
<dbReference type="Gene3D" id="3.40.50.12780">
    <property type="entry name" value="N-terminal domain of ligase-like"/>
    <property type="match status" value="1"/>
</dbReference>
<dbReference type="HAMAP" id="MF_00593">
    <property type="entry name" value="DltA"/>
    <property type="match status" value="1"/>
</dbReference>
<dbReference type="InterPro" id="IPR010071">
    <property type="entry name" value="AA_adenyl_dom"/>
</dbReference>
<dbReference type="InterPro" id="IPR025110">
    <property type="entry name" value="AMP-bd_C"/>
</dbReference>
<dbReference type="InterPro" id="IPR045851">
    <property type="entry name" value="AMP-bd_C_sf"/>
</dbReference>
<dbReference type="InterPro" id="IPR000873">
    <property type="entry name" value="AMP-dep_synth/lig_dom"/>
</dbReference>
<dbReference type="InterPro" id="IPR042099">
    <property type="entry name" value="ANL_N_sf"/>
</dbReference>
<dbReference type="InterPro" id="IPR010072">
    <property type="entry name" value="DltA"/>
</dbReference>
<dbReference type="InterPro" id="IPR044507">
    <property type="entry name" value="DltA-like"/>
</dbReference>
<dbReference type="NCBIfam" id="TIGR01733">
    <property type="entry name" value="AA-adenyl-dom"/>
    <property type="match status" value="1"/>
</dbReference>
<dbReference type="NCBIfam" id="TIGR01734">
    <property type="entry name" value="D-ala-DACP-lig"/>
    <property type="match status" value="1"/>
</dbReference>
<dbReference type="NCBIfam" id="NF003417">
    <property type="entry name" value="PRK04813.1"/>
    <property type="match status" value="1"/>
</dbReference>
<dbReference type="PANTHER" id="PTHR45398">
    <property type="match status" value="1"/>
</dbReference>
<dbReference type="PANTHER" id="PTHR45398:SF1">
    <property type="entry name" value="ENZYME, PUTATIVE (JCVI)-RELATED"/>
    <property type="match status" value="1"/>
</dbReference>
<dbReference type="Pfam" id="PF00501">
    <property type="entry name" value="AMP-binding"/>
    <property type="match status" value="1"/>
</dbReference>
<dbReference type="Pfam" id="PF13193">
    <property type="entry name" value="AMP-binding_C"/>
    <property type="match status" value="1"/>
</dbReference>
<dbReference type="SUPFAM" id="SSF56801">
    <property type="entry name" value="Acetyl-CoA synthetase-like"/>
    <property type="match status" value="1"/>
</dbReference>
<evidence type="ECO:0000255" key="1">
    <source>
        <dbReference type="HAMAP-Rule" id="MF_00593"/>
    </source>
</evidence>
<accession>Q4L4U5</accession>
<comment type="function">
    <text evidence="1">Catalyzes the first step in the D-alanylation of lipoteichoic acid (LTA), the activation of D-alanine and its transfer onto the D-alanyl carrier protein (Dcp) DltC. In an ATP-dependent two-step reaction, forms a high energy D-alanyl-AMP intermediate, followed by transfer of the D-alanyl residue as a thiol ester to the phosphopantheinyl prosthetic group of the Dcp. D-alanylation of LTA plays an important role in modulating the properties of the cell wall in Gram-positive bacteria, influencing the net charge of the cell wall.</text>
</comment>
<comment type="catalytic activity">
    <reaction evidence="1">
        <text>holo-[D-alanyl-carrier protein] + D-alanine + ATP = D-alanyl-[D-alanyl-carrier protein] + AMP + diphosphate</text>
        <dbReference type="Rhea" id="RHEA:55132"/>
        <dbReference type="Rhea" id="RHEA-COMP:14102"/>
        <dbReference type="Rhea" id="RHEA-COMP:14103"/>
        <dbReference type="ChEBI" id="CHEBI:30616"/>
        <dbReference type="ChEBI" id="CHEBI:33019"/>
        <dbReference type="ChEBI" id="CHEBI:57416"/>
        <dbReference type="ChEBI" id="CHEBI:64479"/>
        <dbReference type="ChEBI" id="CHEBI:138620"/>
        <dbReference type="ChEBI" id="CHEBI:456215"/>
        <dbReference type="EC" id="6.2.1.54"/>
    </reaction>
</comment>
<comment type="pathway">
    <text evidence="1">Cell wall biogenesis; lipoteichoic acid biosynthesis.</text>
</comment>
<comment type="subcellular location">
    <subcellularLocation>
        <location evidence="1">Cytoplasm</location>
    </subcellularLocation>
</comment>
<comment type="similarity">
    <text evidence="1">Belongs to the ATP-dependent AMP-binding enzyme family. DltA subfamily.</text>
</comment>
<name>DLTA_STAHJ</name>
<sequence>MTDIINLINDFGQSNPERVAVRHKDEELTYQQLMDESSKLAHLLQDNHKPLIVYGHMSPYMLVGMIGAIKAGCGYVPIDTSVPSERVNMIINKVQPDIIFNTSDTQLNHSNIQELTIQSIQDSDNPTLFDSQMGLTDVVYTIFTSGSTGEPKGVQIEYASLIEFAEWMVSLNESEGSQEWLNQAPFSFDLSVMAIYPCLTSGGTLNLVDKEMINKPKLLNEMLVNTPINAWVSTPSFMEMCLLLPNLNESSYPSLNHFFFCGEILPHRTAKALLDRYPSAVVYNTYGPTEATVAVTGIKLTPEVIEAYNPLPVGVSRPNTSLFTTDEGELVIKGNSVSLGYLDNKEKTDAVFNFEDGLRIYHTGDKAIEKDGQWFIQGRIDFQIKLNGYRMELEEIETQLRQSEFVRETVVVPVYKNNKVIHLIGAVVPTEEVRDDLEMTRQIKSELKSRLPEYMIPRKFVWMKQLPLTSNGKLDRKQVAEDINA</sequence>
<reference key="1">
    <citation type="journal article" date="2005" name="J. Bacteriol.">
        <title>Whole-genome sequencing of Staphylococcus haemolyticus uncovers the extreme plasticity of its genome and the evolution of human-colonizing staphylococcal species.</title>
        <authorList>
            <person name="Takeuchi F."/>
            <person name="Watanabe S."/>
            <person name="Baba T."/>
            <person name="Yuzawa H."/>
            <person name="Ito T."/>
            <person name="Morimoto Y."/>
            <person name="Kuroda M."/>
            <person name="Cui L."/>
            <person name="Takahashi M."/>
            <person name="Ankai A."/>
            <person name="Baba S."/>
            <person name="Fukui S."/>
            <person name="Lee J.C."/>
            <person name="Hiramatsu K."/>
        </authorList>
    </citation>
    <scope>NUCLEOTIDE SEQUENCE [LARGE SCALE GENOMIC DNA]</scope>
    <source>
        <strain>JCSC1435</strain>
    </source>
</reference>
<keyword id="KW-0067">ATP-binding</keyword>
<keyword id="KW-0963">Cytoplasm</keyword>
<keyword id="KW-0436">Ligase</keyword>
<keyword id="KW-0547">Nucleotide-binding</keyword>